<gene>
    <name evidence="1" type="primary">gfcR</name>
    <name type="ordered locus">MMP0079</name>
</gene>
<dbReference type="EMBL" id="BX950229">
    <property type="protein sequence ID" value="CAF29635.1"/>
    <property type="molecule type" value="Genomic_DNA"/>
</dbReference>
<dbReference type="RefSeq" id="WP_011170023.1">
    <property type="nucleotide sequence ID" value="NC_005791.1"/>
</dbReference>
<dbReference type="SMR" id="Q6M139"/>
<dbReference type="STRING" id="267377.MMP0079"/>
<dbReference type="DNASU" id="2761975"/>
<dbReference type="EnsemblBacteria" id="CAF29635">
    <property type="protein sequence ID" value="CAF29635"/>
    <property type="gene ID" value="MMP0079"/>
</dbReference>
<dbReference type="GeneID" id="2761975"/>
<dbReference type="KEGG" id="mmp:MMP0079"/>
<dbReference type="PATRIC" id="fig|267377.15.peg.80"/>
<dbReference type="eggNOG" id="arCOG00028">
    <property type="taxonomic scope" value="Archaea"/>
</dbReference>
<dbReference type="HOGENOM" id="CLU_111001_0_0_2"/>
<dbReference type="OrthoDB" id="68893at2157"/>
<dbReference type="Proteomes" id="UP000000590">
    <property type="component" value="Chromosome"/>
</dbReference>
<dbReference type="GO" id="GO:0003677">
    <property type="term" value="F:DNA binding"/>
    <property type="evidence" value="ECO:0007669"/>
    <property type="project" value="UniProtKB-UniRule"/>
</dbReference>
<dbReference type="GO" id="GO:0004588">
    <property type="term" value="F:orotate phosphoribosyltransferase activity"/>
    <property type="evidence" value="ECO:0007669"/>
    <property type="project" value="TreeGrafter"/>
</dbReference>
<dbReference type="GO" id="GO:0019856">
    <property type="term" value="P:pyrimidine nucleobase biosynthetic process"/>
    <property type="evidence" value="ECO:0007669"/>
    <property type="project" value="TreeGrafter"/>
</dbReference>
<dbReference type="GO" id="GO:0010468">
    <property type="term" value="P:regulation of gene expression"/>
    <property type="evidence" value="ECO:0007669"/>
    <property type="project" value="UniProtKB-UniRule"/>
</dbReference>
<dbReference type="GO" id="GO:0006222">
    <property type="term" value="P:UMP biosynthetic process"/>
    <property type="evidence" value="ECO:0007669"/>
    <property type="project" value="TreeGrafter"/>
</dbReference>
<dbReference type="CDD" id="cd06223">
    <property type="entry name" value="PRTases_typeI"/>
    <property type="match status" value="1"/>
</dbReference>
<dbReference type="Gene3D" id="3.40.50.2020">
    <property type="match status" value="1"/>
</dbReference>
<dbReference type="HAMAP" id="MF_01214">
    <property type="entry name" value="GfcR"/>
    <property type="match status" value="1"/>
</dbReference>
<dbReference type="InterPro" id="IPR022854">
    <property type="entry name" value="GfcR-like"/>
</dbReference>
<dbReference type="InterPro" id="IPR000836">
    <property type="entry name" value="PRibTrfase_dom"/>
</dbReference>
<dbReference type="InterPro" id="IPR029057">
    <property type="entry name" value="PRTase-like"/>
</dbReference>
<dbReference type="NCBIfam" id="NF002620">
    <property type="entry name" value="PRK02277.1"/>
    <property type="match status" value="1"/>
</dbReference>
<dbReference type="PANTHER" id="PTHR19278">
    <property type="entry name" value="OROTATE PHOSPHORIBOSYLTRANSFERASE"/>
    <property type="match status" value="1"/>
</dbReference>
<dbReference type="PANTHER" id="PTHR19278:SF41">
    <property type="entry name" value="PYRE-LIKE PROTEIN"/>
    <property type="match status" value="1"/>
</dbReference>
<dbReference type="Pfam" id="PF00156">
    <property type="entry name" value="Pribosyltran"/>
    <property type="match status" value="1"/>
</dbReference>
<dbReference type="SUPFAM" id="SSF53271">
    <property type="entry name" value="PRTase-like"/>
    <property type="match status" value="1"/>
</dbReference>
<dbReference type="PROSITE" id="PS00103">
    <property type="entry name" value="PUR_PYR_PR_TRANSFER"/>
    <property type="match status" value="1"/>
</dbReference>
<accession>Q6M139</accession>
<proteinExistence type="inferred from homology"/>
<protein>
    <recommendedName>
        <fullName evidence="1">Transcriptional regulator GfcR</fullName>
    </recommendedName>
</protein>
<feature type="chain" id="PRO_0000298897" description="Transcriptional regulator GfcR">
    <location>
        <begin position="1"/>
        <end position="205"/>
    </location>
</feature>
<comment type="domain">
    <text evidence="1">Contains an N-terminal DNA-binding winged helix-turn-helix domain and a C-terminal regulatory domain (or effector binding domain) resembling phosphoribosyltransferase (PRT) domain.</text>
</comment>
<comment type="similarity">
    <text evidence="1">Belongs to the purine/pyrimidine phosphoribosyltransferase family. GfcR subfamily.</text>
</comment>
<reference key="1">
    <citation type="journal article" date="2004" name="J. Bacteriol.">
        <title>Complete genome sequence of the genetically tractable hydrogenotrophic methanogen Methanococcus maripaludis.</title>
        <authorList>
            <person name="Hendrickson E.L."/>
            <person name="Kaul R."/>
            <person name="Zhou Y."/>
            <person name="Bovee D."/>
            <person name="Chapman P."/>
            <person name="Chung J."/>
            <person name="Conway de Macario E."/>
            <person name="Dodsworth J.A."/>
            <person name="Gillett W."/>
            <person name="Graham D.E."/>
            <person name="Hackett M."/>
            <person name="Haydock A.K."/>
            <person name="Kang A."/>
            <person name="Land M.L."/>
            <person name="Levy R."/>
            <person name="Lie T.J."/>
            <person name="Major T.A."/>
            <person name="Moore B.C."/>
            <person name="Porat I."/>
            <person name="Palmeiri A."/>
            <person name="Rouse G."/>
            <person name="Saenphimmachak C."/>
            <person name="Soell D."/>
            <person name="Van Dien S."/>
            <person name="Wang T."/>
            <person name="Whitman W.B."/>
            <person name="Xia Q."/>
            <person name="Zhang Y."/>
            <person name="Larimer F.W."/>
            <person name="Olson M.V."/>
            <person name="Leigh J.A."/>
        </authorList>
    </citation>
    <scope>NUCLEOTIDE SEQUENCE [LARGE SCALE GENOMIC DNA]</scope>
    <source>
        <strain>DSM 14266 / JCM 13030 / NBRC 101832 / S2 / LL</strain>
    </source>
</reference>
<keyword id="KW-0238">DNA-binding</keyword>
<keyword id="KW-1185">Reference proteome</keyword>
<keyword id="KW-0804">Transcription</keyword>
<keyword id="KW-0805">Transcription regulation</keyword>
<organism>
    <name type="scientific">Methanococcus maripaludis (strain DSM 14266 / JCM 13030 / NBRC 101832 / S2 / LL)</name>
    <dbReference type="NCBI Taxonomy" id="267377"/>
    <lineage>
        <taxon>Archaea</taxon>
        <taxon>Methanobacteriati</taxon>
        <taxon>Methanobacteriota</taxon>
        <taxon>Methanomada group</taxon>
        <taxon>Methanococci</taxon>
        <taxon>Methanococcales</taxon>
        <taxon>Methanococcaceae</taxon>
        <taxon>Methanococcus</taxon>
    </lineage>
</organism>
<sequence length="205" mass="22744">MKKELILKALKLRDMGFPSGDIAEELNISVKTALYLTLNGEELLKAEESPKEDSEKLDIFLEWDNVRASSRRLRNISKIICDMLSDVEFDGVVGISSGGVPLATLISDELDKNFSIYVPKKHIHTEKEKTTGFIGQNMSSIVGKDVIIVDDVMTSGNSVKETIKYLKGIANPKKVFVVMDKSGIDEIEGVSIEHLFRTGVVDIKK</sequence>
<evidence type="ECO:0000255" key="1">
    <source>
        <dbReference type="HAMAP-Rule" id="MF_01214"/>
    </source>
</evidence>
<name>GFCR_METMP</name>